<feature type="chain" id="PRO_1000023540" description="Arginine repressor">
    <location>
        <begin position="1"/>
        <end position="153"/>
    </location>
</feature>
<accession>A3N1U5</accession>
<sequence length="153" mass="16789">MEKLDKLSEAFKALLKQEKFSSQSEIVTALQELGFENINQSKVSRMLSKFGAVRTRNTKMEMVYQLPAELGVPTTSSPLKNLVVDIDHNDVLIVVKTSPGAAQLIARLLDSMGKSEGILGTIAGDDTIFITPTKVTPVEVLMQNVTELFESSF</sequence>
<reference key="1">
    <citation type="journal article" date="2008" name="J. Bacteriol.">
        <title>The complete genome sequence of Actinobacillus pleuropneumoniae L20 (serotype 5b).</title>
        <authorList>
            <person name="Foote S.J."/>
            <person name="Bosse J.T."/>
            <person name="Bouevitch A.B."/>
            <person name="Langford P.R."/>
            <person name="Young N.M."/>
            <person name="Nash J.H.E."/>
        </authorList>
    </citation>
    <scope>NUCLEOTIDE SEQUENCE [LARGE SCALE GENOMIC DNA]</scope>
    <source>
        <strain>L20</strain>
    </source>
</reference>
<protein>
    <recommendedName>
        <fullName evidence="1">Arginine repressor</fullName>
    </recommendedName>
</protein>
<organism>
    <name type="scientific">Actinobacillus pleuropneumoniae serotype 5b (strain L20)</name>
    <dbReference type="NCBI Taxonomy" id="416269"/>
    <lineage>
        <taxon>Bacteria</taxon>
        <taxon>Pseudomonadati</taxon>
        <taxon>Pseudomonadota</taxon>
        <taxon>Gammaproteobacteria</taxon>
        <taxon>Pasteurellales</taxon>
        <taxon>Pasteurellaceae</taxon>
        <taxon>Actinobacillus</taxon>
    </lineage>
</organism>
<evidence type="ECO:0000255" key="1">
    <source>
        <dbReference type="HAMAP-Rule" id="MF_00173"/>
    </source>
</evidence>
<gene>
    <name evidence="1" type="primary">argR</name>
    <name type="ordered locus">APL_1295</name>
</gene>
<dbReference type="EMBL" id="CP000569">
    <property type="protein sequence ID" value="ABN74381.1"/>
    <property type="molecule type" value="Genomic_DNA"/>
</dbReference>
<dbReference type="RefSeq" id="WP_009875362.1">
    <property type="nucleotide sequence ID" value="NC_009053.1"/>
</dbReference>
<dbReference type="SMR" id="A3N1U5"/>
<dbReference type="STRING" id="416269.APL_1295"/>
<dbReference type="EnsemblBacteria" id="ABN74381">
    <property type="protein sequence ID" value="ABN74381"/>
    <property type="gene ID" value="APL_1295"/>
</dbReference>
<dbReference type="KEGG" id="apl:APL_1295"/>
<dbReference type="PATRIC" id="fig|416269.6.peg.1352"/>
<dbReference type="eggNOG" id="COG1438">
    <property type="taxonomic scope" value="Bacteria"/>
</dbReference>
<dbReference type="HOGENOM" id="CLU_097103_2_0_6"/>
<dbReference type="UniPathway" id="UPA00068"/>
<dbReference type="Proteomes" id="UP000001432">
    <property type="component" value="Chromosome"/>
</dbReference>
<dbReference type="GO" id="GO:0005737">
    <property type="term" value="C:cytoplasm"/>
    <property type="evidence" value="ECO:0007669"/>
    <property type="project" value="UniProtKB-SubCell"/>
</dbReference>
<dbReference type="GO" id="GO:0034618">
    <property type="term" value="F:arginine binding"/>
    <property type="evidence" value="ECO:0007669"/>
    <property type="project" value="InterPro"/>
</dbReference>
<dbReference type="GO" id="GO:0003677">
    <property type="term" value="F:DNA binding"/>
    <property type="evidence" value="ECO:0007669"/>
    <property type="project" value="UniProtKB-KW"/>
</dbReference>
<dbReference type="GO" id="GO:0003700">
    <property type="term" value="F:DNA-binding transcription factor activity"/>
    <property type="evidence" value="ECO:0007669"/>
    <property type="project" value="UniProtKB-UniRule"/>
</dbReference>
<dbReference type="GO" id="GO:0006526">
    <property type="term" value="P:L-arginine biosynthetic process"/>
    <property type="evidence" value="ECO:0007669"/>
    <property type="project" value="UniProtKB-UniPathway"/>
</dbReference>
<dbReference type="GO" id="GO:0051259">
    <property type="term" value="P:protein complex oligomerization"/>
    <property type="evidence" value="ECO:0007669"/>
    <property type="project" value="InterPro"/>
</dbReference>
<dbReference type="GO" id="GO:1900079">
    <property type="term" value="P:regulation of arginine biosynthetic process"/>
    <property type="evidence" value="ECO:0007669"/>
    <property type="project" value="UniProtKB-UniRule"/>
</dbReference>
<dbReference type="Gene3D" id="3.30.1360.40">
    <property type="match status" value="1"/>
</dbReference>
<dbReference type="Gene3D" id="1.10.10.10">
    <property type="entry name" value="Winged helix-like DNA-binding domain superfamily/Winged helix DNA-binding domain"/>
    <property type="match status" value="1"/>
</dbReference>
<dbReference type="HAMAP" id="MF_00173">
    <property type="entry name" value="Arg_repressor"/>
    <property type="match status" value="1"/>
</dbReference>
<dbReference type="InterPro" id="IPR001669">
    <property type="entry name" value="Arg_repress"/>
</dbReference>
<dbReference type="InterPro" id="IPR020899">
    <property type="entry name" value="Arg_repress_C"/>
</dbReference>
<dbReference type="InterPro" id="IPR036251">
    <property type="entry name" value="Arg_repress_C_sf"/>
</dbReference>
<dbReference type="InterPro" id="IPR020900">
    <property type="entry name" value="Arg_repress_DNA-bd"/>
</dbReference>
<dbReference type="InterPro" id="IPR036388">
    <property type="entry name" value="WH-like_DNA-bd_sf"/>
</dbReference>
<dbReference type="InterPro" id="IPR036390">
    <property type="entry name" value="WH_DNA-bd_sf"/>
</dbReference>
<dbReference type="NCBIfam" id="TIGR01529">
    <property type="entry name" value="argR_whole"/>
    <property type="match status" value="1"/>
</dbReference>
<dbReference type="NCBIfam" id="NF003457">
    <property type="entry name" value="PRK05066.1"/>
    <property type="match status" value="1"/>
</dbReference>
<dbReference type="PANTHER" id="PTHR34471">
    <property type="entry name" value="ARGININE REPRESSOR"/>
    <property type="match status" value="1"/>
</dbReference>
<dbReference type="PANTHER" id="PTHR34471:SF1">
    <property type="entry name" value="ARGININE REPRESSOR"/>
    <property type="match status" value="1"/>
</dbReference>
<dbReference type="Pfam" id="PF01316">
    <property type="entry name" value="Arg_repressor"/>
    <property type="match status" value="1"/>
</dbReference>
<dbReference type="Pfam" id="PF02863">
    <property type="entry name" value="Arg_repressor_C"/>
    <property type="match status" value="1"/>
</dbReference>
<dbReference type="PRINTS" id="PR01467">
    <property type="entry name" value="ARGREPRESSOR"/>
</dbReference>
<dbReference type="SUPFAM" id="SSF55252">
    <property type="entry name" value="C-terminal domain of arginine repressor"/>
    <property type="match status" value="1"/>
</dbReference>
<dbReference type="SUPFAM" id="SSF46785">
    <property type="entry name" value="Winged helix' DNA-binding domain"/>
    <property type="match status" value="1"/>
</dbReference>
<name>ARGR_ACTP2</name>
<keyword id="KW-0028">Amino-acid biosynthesis</keyword>
<keyword id="KW-0055">Arginine biosynthesis</keyword>
<keyword id="KW-0963">Cytoplasm</keyword>
<keyword id="KW-0238">DNA-binding</keyword>
<keyword id="KW-1185">Reference proteome</keyword>
<keyword id="KW-0678">Repressor</keyword>
<keyword id="KW-0804">Transcription</keyword>
<keyword id="KW-0805">Transcription regulation</keyword>
<comment type="function">
    <text evidence="1">Regulates arginine biosynthesis genes.</text>
</comment>
<comment type="pathway">
    <text>Amino-acid biosynthesis; L-arginine biosynthesis [regulation].</text>
</comment>
<comment type="subcellular location">
    <subcellularLocation>
        <location evidence="1">Cytoplasm</location>
    </subcellularLocation>
</comment>
<comment type="similarity">
    <text evidence="1">Belongs to the ArgR family.</text>
</comment>
<proteinExistence type="inferred from homology"/>